<name>NHAA_TROW8</name>
<organism>
    <name type="scientific">Tropheryma whipplei (strain TW08/27)</name>
    <name type="common">Whipple's bacillus</name>
    <dbReference type="NCBI Taxonomy" id="218496"/>
    <lineage>
        <taxon>Bacteria</taxon>
        <taxon>Bacillati</taxon>
        <taxon>Actinomycetota</taxon>
        <taxon>Actinomycetes</taxon>
        <taxon>Micrococcales</taxon>
        <taxon>Tropherymataceae</taxon>
        <taxon>Tropheryma</taxon>
    </lineage>
</organism>
<dbReference type="EMBL" id="BX251412">
    <property type="protein sequence ID" value="CAD67454.1"/>
    <property type="molecule type" value="Genomic_DNA"/>
</dbReference>
<dbReference type="RefSeq" id="WP_011096732.1">
    <property type="nucleotide sequence ID" value="NC_004551.1"/>
</dbReference>
<dbReference type="SMR" id="Q83N58"/>
<dbReference type="GeneID" id="67388576"/>
<dbReference type="KEGG" id="tws:TW795"/>
<dbReference type="HOGENOM" id="CLU_015803_1_2_11"/>
<dbReference type="GO" id="GO:0005886">
    <property type="term" value="C:plasma membrane"/>
    <property type="evidence" value="ECO:0007669"/>
    <property type="project" value="UniProtKB-SubCell"/>
</dbReference>
<dbReference type="GO" id="GO:0015385">
    <property type="term" value="F:sodium:proton antiporter activity"/>
    <property type="evidence" value="ECO:0007669"/>
    <property type="project" value="TreeGrafter"/>
</dbReference>
<dbReference type="GO" id="GO:0006885">
    <property type="term" value="P:regulation of pH"/>
    <property type="evidence" value="ECO:0007669"/>
    <property type="project" value="InterPro"/>
</dbReference>
<dbReference type="Gene3D" id="1.20.1530.10">
    <property type="entry name" value="Na+/H+ antiporter like domain"/>
    <property type="match status" value="1"/>
</dbReference>
<dbReference type="HAMAP" id="MF_01844">
    <property type="entry name" value="NhaA"/>
    <property type="match status" value="1"/>
</dbReference>
<dbReference type="InterPro" id="IPR023171">
    <property type="entry name" value="Na/H_antiporter_dom_sf"/>
</dbReference>
<dbReference type="InterPro" id="IPR004670">
    <property type="entry name" value="NhaA"/>
</dbReference>
<dbReference type="PANTHER" id="PTHR30341:SF0">
    <property type="entry name" value="NA(+)_H(+) ANTIPORTER NHAA"/>
    <property type="match status" value="1"/>
</dbReference>
<dbReference type="PANTHER" id="PTHR30341">
    <property type="entry name" value="SODIUM ION/PROTON ANTIPORTER NHAA-RELATED"/>
    <property type="match status" value="1"/>
</dbReference>
<dbReference type="Pfam" id="PF06965">
    <property type="entry name" value="Na_H_antiport_1"/>
    <property type="match status" value="1"/>
</dbReference>
<reference key="1">
    <citation type="journal article" date="2003" name="Lancet">
        <title>Sequencing and analysis of the genome of the Whipple's disease bacterium Tropheryma whipplei.</title>
        <authorList>
            <person name="Bentley S.D."/>
            <person name="Maiwald M."/>
            <person name="Murphy L.D."/>
            <person name="Pallen M.J."/>
            <person name="Yeats C.A."/>
            <person name="Dover L.G."/>
            <person name="Norbertczak H.T."/>
            <person name="Besra G.S."/>
            <person name="Quail M.A."/>
            <person name="Harris D.E."/>
            <person name="von Herbay A."/>
            <person name="Goble A."/>
            <person name="Rutter S."/>
            <person name="Squares R."/>
            <person name="Squares S."/>
            <person name="Barrell B.G."/>
            <person name="Parkhill J."/>
            <person name="Relman D.A."/>
        </authorList>
    </citation>
    <scope>NUCLEOTIDE SEQUENCE [LARGE SCALE GENOMIC DNA]</scope>
    <source>
        <strain>TW08/27</strain>
    </source>
</reference>
<feature type="chain" id="PRO_0000334453" description="Na(+)/H(+) antiporter NhaA">
    <location>
        <begin position="1"/>
        <end position="385"/>
    </location>
</feature>
<feature type="transmembrane region" description="Helical" evidence="1">
    <location>
        <begin position="9"/>
        <end position="29"/>
    </location>
</feature>
<feature type="transmembrane region" description="Helical" evidence="1">
    <location>
        <begin position="45"/>
        <end position="65"/>
    </location>
</feature>
<feature type="transmembrane region" description="Helical" evidence="1">
    <location>
        <begin position="87"/>
        <end position="107"/>
    </location>
</feature>
<feature type="transmembrane region" description="Helical" evidence="1">
    <location>
        <begin position="114"/>
        <end position="134"/>
    </location>
</feature>
<feature type="transmembrane region" description="Helical" evidence="1">
    <location>
        <begin position="155"/>
        <end position="175"/>
    </location>
</feature>
<feature type="transmembrane region" description="Helical" evidence="1">
    <location>
        <begin position="198"/>
        <end position="218"/>
    </location>
</feature>
<feature type="transmembrane region" description="Helical" evidence="1">
    <location>
        <begin position="220"/>
        <end position="235"/>
    </location>
</feature>
<feature type="transmembrane region" description="Helical" evidence="1">
    <location>
        <begin position="245"/>
        <end position="265"/>
    </location>
</feature>
<feature type="transmembrane region" description="Helical" evidence="1">
    <location>
        <begin position="282"/>
        <end position="302"/>
    </location>
</feature>
<feature type="transmembrane region" description="Helical" evidence="1">
    <location>
        <begin position="312"/>
        <end position="332"/>
    </location>
</feature>
<feature type="transmembrane region" description="Helical" evidence="1">
    <location>
        <begin position="345"/>
        <end position="365"/>
    </location>
</feature>
<sequence length="385" mass="41235">MSIIRSERYSAIFLLCSAALAIIFANVLDPDTWHAVHSAVSEYHIFGLITPHDIVADFLLAVFFFAVAIELKHELVKGELSSFSKAIIPGVCAAGGILVPISIYLSVASVLPNGWPVPTATDVAFSLGILAIFGSSLPSKVRIFLLALAVLDDLAGIVIIATAFSVSISYWWIIVACITVGLFGFCSYRLARCKTSKTFLIIPAMLLCALAAWVSVYQSGIHATIAGVMLGIMLNRKQGAAIEHALEPYINGIILPAFAFLAAMVRVPHLPLDEISPALWGILLGLLFGKLLGISVFGIIALKFFRKKSISFFNLLVVSALGGIGFTVSLLMNELAFLGTPVHEQGVIAVLIGSLLSAILAIILMRCYKGRKSKSLPGRKGRVSH</sequence>
<protein>
    <recommendedName>
        <fullName evidence="1">Na(+)/H(+) antiporter NhaA</fullName>
    </recommendedName>
    <alternativeName>
        <fullName evidence="1">Sodium/proton antiporter NhaA</fullName>
    </alternativeName>
</protein>
<comment type="function">
    <text evidence="1">Na(+)/H(+) antiporter that extrudes sodium in exchange for external protons.</text>
</comment>
<comment type="catalytic activity">
    <reaction evidence="1">
        <text>Na(+)(in) + 2 H(+)(out) = Na(+)(out) + 2 H(+)(in)</text>
        <dbReference type="Rhea" id="RHEA:29251"/>
        <dbReference type="ChEBI" id="CHEBI:15378"/>
        <dbReference type="ChEBI" id="CHEBI:29101"/>
    </reaction>
    <physiologicalReaction direction="left-to-right" evidence="1">
        <dbReference type="Rhea" id="RHEA:29252"/>
    </physiologicalReaction>
</comment>
<comment type="subcellular location">
    <subcellularLocation>
        <location evidence="1">Cell membrane</location>
        <topology evidence="1">Multi-pass membrane protein</topology>
    </subcellularLocation>
</comment>
<comment type="similarity">
    <text evidence="1">Belongs to the NhaA Na(+)/H(+) (TC 2.A.33) antiporter family.</text>
</comment>
<evidence type="ECO:0000255" key="1">
    <source>
        <dbReference type="HAMAP-Rule" id="MF_01844"/>
    </source>
</evidence>
<accession>Q83N58</accession>
<proteinExistence type="inferred from homology"/>
<keyword id="KW-0050">Antiport</keyword>
<keyword id="KW-1003">Cell membrane</keyword>
<keyword id="KW-0406">Ion transport</keyword>
<keyword id="KW-0472">Membrane</keyword>
<keyword id="KW-0915">Sodium</keyword>
<keyword id="KW-0739">Sodium transport</keyword>
<keyword id="KW-0812">Transmembrane</keyword>
<keyword id="KW-1133">Transmembrane helix</keyword>
<keyword id="KW-0813">Transport</keyword>
<gene>
    <name evidence="1" type="primary">nhaA</name>
    <name type="ordered locus">TW795</name>
</gene>